<proteinExistence type="inferred from homology"/>
<protein>
    <recommendedName>
        <fullName evidence="1">DNA-directed RNA polymerase subunit alpha</fullName>
        <shortName evidence="1">RNAP subunit alpha</shortName>
        <ecNumber evidence="1">2.7.7.6</ecNumber>
    </recommendedName>
    <alternativeName>
        <fullName evidence="1">RNA polymerase subunit alpha</fullName>
    </alternativeName>
    <alternativeName>
        <fullName evidence="1">Transcriptase subunit alpha</fullName>
    </alternativeName>
</protein>
<reference key="1">
    <citation type="journal article" date="2009" name="Appl. Environ. Microbiol.">
        <title>Three genomes from the phylum Acidobacteria provide insight into the lifestyles of these microorganisms in soils.</title>
        <authorList>
            <person name="Ward N.L."/>
            <person name="Challacombe J.F."/>
            <person name="Janssen P.H."/>
            <person name="Henrissat B."/>
            <person name="Coutinho P.M."/>
            <person name="Wu M."/>
            <person name="Xie G."/>
            <person name="Haft D.H."/>
            <person name="Sait M."/>
            <person name="Badger J."/>
            <person name="Barabote R.D."/>
            <person name="Bradley B."/>
            <person name="Brettin T.S."/>
            <person name="Brinkac L.M."/>
            <person name="Bruce D."/>
            <person name="Creasy T."/>
            <person name="Daugherty S.C."/>
            <person name="Davidsen T.M."/>
            <person name="DeBoy R.T."/>
            <person name="Detter J.C."/>
            <person name="Dodson R.J."/>
            <person name="Durkin A.S."/>
            <person name="Ganapathy A."/>
            <person name="Gwinn-Giglio M."/>
            <person name="Han C.S."/>
            <person name="Khouri H."/>
            <person name="Kiss H."/>
            <person name="Kothari S.P."/>
            <person name="Madupu R."/>
            <person name="Nelson K.E."/>
            <person name="Nelson W.C."/>
            <person name="Paulsen I."/>
            <person name="Penn K."/>
            <person name="Ren Q."/>
            <person name="Rosovitz M.J."/>
            <person name="Selengut J.D."/>
            <person name="Shrivastava S."/>
            <person name="Sullivan S.A."/>
            <person name="Tapia R."/>
            <person name="Thompson L.S."/>
            <person name="Watkins K.L."/>
            <person name="Yang Q."/>
            <person name="Yu C."/>
            <person name="Zafar N."/>
            <person name="Zhou L."/>
            <person name="Kuske C.R."/>
        </authorList>
    </citation>
    <scope>NUCLEOTIDE SEQUENCE [LARGE SCALE GENOMIC DNA]</scope>
    <source>
        <strain>Ellin6076</strain>
    </source>
</reference>
<comment type="function">
    <text evidence="1">DNA-dependent RNA polymerase catalyzes the transcription of DNA into RNA using the four ribonucleoside triphosphates as substrates.</text>
</comment>
<comment type="catalytic activity">
    <reaction evidence="1">
        <text>RNA(n) + a ribonucleoside 5'-triphosphate = RNA(n+1) + diphosphate</text>
        <dbReference type="Rhea" id="RHEA:21248"/>
        <dbReference type="Rhea" id="RHEA-COMP:14527"/>
        <dbReference type="Rhea" id="RHEA-COMP:17342"/>
        <dbReference type="ChEBI" id="CHEBI:33019"/>
        <dbReference type="ChEBI" id="CHEBI:61557"/>
        <dbReference type="ChEBI" id="CHEBI:140395"/>
        <dbReference type="EC" id="2.7.7.6"/>
    </reaction>
</comment>
<comment type="subunit">
    <text evidence="1">Homodimer. The RNAP catalytic core consists of 2 alpha, 1 beta, 1 beta' and 1 omega subunit. When a sigma factor is associated with the core the holoenzyme is formed, which can initiate transcription.</text>
</comment>
<comment type="domain">
    <text evidence="1">The N-terminal domain is essential for RNAP assembly and basal transcription, whereas the C-terminal domain is involved in interaction with transcriptional regulators and with upstream promoter elements.</text>
</comment>
<comment type="similarity">
    <text evidence="1">Belongs to the RNA polymerase alpha chain family.</text>
</comment>
<organism>
    <name type="scientific">Solibacter usitatus (strain Ellin6076)</name>
    <dbReference type="NCBI Taxonomy" id="234267"/>
    <lineage>
        <taxon>Bacteria</taxon>
        <taxon>Pseudomonadati</taxon>
        <taxon>Acidobacteriota</taxon>
        <taxon>Terriglobia</taxon>
        <taxon>Bryobacterales</taxon>
        <taxon>Solibacteraceae</taxon>
        <taxon>Candidatus Solibacter</taxon>
    </lineage>
</organism>
<feature type="chain" id="PRO_0000296870" description="DNA-directed RNA polymerase subunit alpha">
    <location>
        <begin position="1"/>
        <end position="347"/>
    </location>
</feature>
<feature type="region of interest" description="Alpha N-terminal domain (alpha-NTD)" evidence="1">
    <location>
        <begin position="1"/>
        <end position="230"/>
    </location>
</feature>
<feature type="region of interest" description="Alpha C-terminal domain (alpha-CTD)" evidence="1">
    <location>
        <begin position="247"/>
        <end position="347"/>
    </location>
</feature>
<feature type="region of interest" description="Disordered" evidence="2">
    <location>
        <begin position="320"/>
        <end position="347"/>
    </location>
</feature>
<feature type="compositionally biased region" description="Acidic residues" evidence="2">
    <location>
        <begin position="336"/>
        <end position="347"/>
    </location>
</feature>
<dbReference type="EC" id="2.7.7.6" evidence="1"/>
<dbReference type="EMBL" id="CP000473">
    <property type="protein sequence ID" value="ABJ86045.1"/>
    <property type="molecule type" value="Genomic_DNA"/>
</dbReference>
<dbReference type="SMR" id="Q01WC0"/>
<dbReference type="FunCoup" id="Q01WC0">
    <property type="interactions" value="581"/>
</dbReference>
<dbReference type="STRING" id="234267.Acid_5090"/>
<dbReference type="KEGG" id="sus:Acid_5090"/>
<dbReference type="eggNOG" id="COG0202">
    <property type="taxonomic scope" value="Bacteria"/>
</dbReference>
<dbReference type="HOGENOM" id="CLU_053084_0_1_0"/>
<dbReference type="InParanoid" id="Q01WC0"/>
<dbReference type="OrthoDB" id="9805706at2"/>
<dbReference type="GO" id="GO:0005737">
    <property type="term" value="C:cytoplasm"/>
    <property type="evidence" value="ECO:0007669"/>
    <property type="project" value="UniProtKB-ARBA"/>
</dbReference>
<dbReference type="GO" id="GO:0000428">
    <property type="term" value="C:DNA-directed RNA polymerase complex"/>
    <property type="evidence" value="ECO:0007669"/>
    <property type="project" value="UniProtKB-KW"/>
</dbReference>
<dbReference type="GO" id="GO:0003677">
    <property type="term" value="F:DNA binding"/>
    <property type="evidence" value="ECO:0007669"/>
    <property type="project" value="UniProtKB-UniRule"/>
</dbReference>
<dbReference type="GO" id="GO:0003899">
    <property type="term" value="F:DNA-directed RNA polymerase activity"/>
    <property type="evidence" value="ECO:0007669"/>
    <property type="project" value="UniProtKB-UniRule"/>
</dbReference>
<dbReference type="GO" id="GO:0046983">
    <property type="term" value="F:protein dimerization activity"/>
    <property type="evidence" value="ECO:0007669"/>
    <property type="project" value="InterPro"/>
</dbReference>
<dbReference type="GO" id="GO:0006351">
    <property type="term" value="P:DNA-templated transcription"/>
    <property type="evidence" value="ECO:0007669"/>
    <property type="project" value="UniProtKB-UniRule"/>
</dbReference>
<dbReference type="CDD" id="cd06928">
    <property type="entry name" value="RNAP_alpha_NTD"/>
    <property type="match status" value="1"/>
</dbReference>
<dbReference type="FunFam" id="1.10.150.20:FF:000001">
    <property type="entry name" value="DNA-directed RNA polymerase subunit alpha"/>
    <property type="match status" value="1"/>
</dbReference>
<dbReference type="FunFam" id="2.170.120.12:FF:000001">
    <property type="entry name" value="DNA-directed RNA polymerase subunit alpha"/>
    <property type="match status" value="1"/>
</dbReference>
<dbReference type="Gene3D" id="1.10.150.20">
    <property type="entry name" value="5' to 3' exonuclease, C-terminal subdomain"/>
    <property type="match status" value="1"/>
</dbReference>
<dbReference type="Gene3D" id="2.170.120.12">
    <property type="entry name" value="DNA-directed RNA polymerase, insert domain"/>
    <property type="match status" value="1"/>
</dbReference>
<dbReference type="Gene3D" id="3.30.1360.10">
    <property type="entry name" value="RNA polymerase, RBP11-like subunit"/>
    <property type="match status" value="1"/>
</dbReference>
<dbReference type="HAMAP" id="MF_00059">
    <property type="entry name" value="RNApol_bact_RpoA"/>
    <property type="match status" value="1"/>
</dbReference>
<dbReference type="InterPro" id="IPR011262">
    <property type="entry name" value="DNA-dir_RNA_pol_insert"/>
</dbReference>
<dbReference type="InterPro" id="IPR011263">
    <property type="entry name" value="DNA-dir_RNA_pol_RpoA/D/Rpb3"/>
</dbReference>
<dbReference type="InterPro" id="IPR011773">
    <property type="entry name" value="DNA-dir_RpoA"/>
</dbReference>
<dbReference type="InterPro" id="IPR036603">
    <property type="entry name" value="RBP11-like"/>
</dbReference>
<dbReference type="InterPro" id="IPR011260">
    <property type="entry name" value="RNAP_asu_C"/>
</dbReference>
<dbReference type="InterPro" id="IPR036643">
    <property type="entry name" value="RNApol_insert_sf"/>
</dbReference>
<dbReference type="NCBIfam" id="NF003513">
    <property type="entry name" value="PRK05182.1-2"/>
    <property type="match status" value="1"/>
</dbReference>
<dbReference type="NCBIfam" id="NF003519">
    <property type="entry name" value="PRK05182.2-5"/>
    <property type="match status" value="1"/>
</dbReference>
<dbReference type="NCBIfam" id="TIGR02027">
    <property type="entry name" value="rpoA"/>
    <property type="match status" value="1"/>
</dbReference>
<dbReference type="Pfam" id="PF01000">
    <property type="entry name" value="RNA_pol_A_bac"/>
    <property type="match status" value="1"/>
</dbReference>
<dbReference type="Pfam" id="PF03118">
    <property type="entry name" value="RNA_pol_A_CTD"/>
    <property type="match status" value="1"/>
</dbReference>
<dbReference type="Pfam" id="PF01193">
    <property type="entry name" value="RNA_pol_L"/>
    <property type="match status" value="1"/>
</dbReference>
<dbReference type="SMART" id="SM00662">
    <property type="entry name" value="RPOLD"/>
    <property type="match status" value="1"/>
</dbReference>
<dbReference type="SUPFAM" id="SSF47789">
    <property type="entry name" value="C-terminal domain of RNA polymerase alpha subunit"/>
    <property type="match status" value="1"/>
</dbReference>
<dbReference type="SUPFAM" id="SSF56553">
    <property type="entry name" value="Insert subdomain of RNA polymerase alpha subunit"/>
    <property type="match status" value="1"/>
</dbReference>
<dbReference type="SUPFAM" id="SSF55257">
    <property type="entry name" value="RBP11-like subunits of RNA polymerase"/>
    <property type="match status" value="1"/>
</dbReference>
<keyword id="KW-0240">DNA-directed RNA polymerase</keyword>
<keyword id="KW-0548">Nucleotidyltransferase</keyword>
<keyword id="KW-0804">Transcription</keyword>
<keyword id="KW-0808">Transferase</keyword>
<accession>Q01WC0</accession>
<evidence type="ECO:0000255" key="1">
    <source>
        <dbReference type="HAMAP-Rule" id="MF_00059"/>
    </source>
</evidence>
<evidence type="ECO:0000256" key="2">
    <source>
        <dbReference type="SAM" id="MobiDB-lite"/>
    </source>
</evidence>
<name>RPOA_SOLUE</name>
<gene>
    <name evidence="1" type="primary">rpoA</name>
    <name type="ordered locus">Acid_5090</name>
</gene>
<sequence length="347" mass="38239">MFKGFQKPKRLVANTETLTERYGMFTAQPFQRGFGTTIGNSLRRVLLSSIEGAAITAVRIEGVEHEFSPIPGVVEDATDIILNLKQIPFKISSDGIKTVRLSVDSHGDVRSGQIETDADVEVLDRDVHVATVSEGGKLNIEMRLKSGRGYVSADKNFDEDLALGYIPIDSVHSPVRKVNFAVEAARLGQMTDYDKLTLEVWTNGAVSPQDSIGYAAKLLKDHMTIFINFEEVPEQTEEISERGMDKMNEVLNRSVEELELSVRSYNCLKNANIQSIGELVQKTEAEMLRTKNFGRKSLNEIKEILANMGLSLGMRIDQHGRLVAPPPSAGGGPDFGPEDDGQDQIGE</sequence>